<reference key="1">
    <citation type="journal article" date="2010" name="PLoS ONE">
        <title>Genome sequence of Cronobacter sakazakii BAA-894 and comparative genomic hybridization analysis with other Cronobacter species.</title>
        <authorList>
            <person name="Kucerova E."/>
            <person name="Clifton S.W."/>
            <person name="Xia X.Q."/>
            <person name="Long F."/>
            <person name="Porwollik S."/>
            <person name="Fulton L."/>
            <person name="Fronick C."/>
            <person name="Minx P."/>
            <person name="Kyung K."/>
            <person name="Warren W."/>
            <person name="Fulton R."/>
            <person name="Feng D."/>
            <person name="Wollam A."/>
            <person name="Shah N."/>
            <person name="Bhonagiri V."/>
            <person name="Nash W.E."/>
            <person name="Hallsworth-Pepin K."/>
            <person name="Wilson R.K."/>
            <person name="McClelland M."/>
            <person name="Forsythe S.J."/>
        </authorList>
    </citation>
    <scope>NUCLEOTIDE SEQUENCE [LARGE SCALE GENOMIC DNA]</scope>
    <source>
        <strain>ATCC BAA-894</strain>
    </source>
</reference>
<proteinExistence type="inferred from homology"/>
<feature type="chain" id="PRO_1000061514" description="Putative pre-16S rRNA nuclease">
    <location>
        <begin position="1"/>
        <end position="138"/>
    </location>
</feature>
<protein>
    <recommendedName>
        <fullName evidence="1">Putative pre-16S rRNA nuclease</fullName>
        <ecNumber evidence="1">3.1.-.-</ecNumber>
    </recommendedName>
</protein>
<accession>A7MJR8</accession>
<organism>
    <name type="scientific">Cronobacter sakazakii (strain ATCC BAA-894)</name>
    <name type="common">Enterobacter sakazakii</name>
    <dbReference type="NCBI Taxonomy" id="290339"/>
    <lineage>
        <taxon>Bacteria</taxon>
        <taxon>Pseudomonadati</taxon>
        <taxon>Pseudomonadota</taxon>
        <taxon>Gammaproteobacteria</taxon>
        <taxon>Enterobacterales</taxon>
        <taxon>Enterobacteriaceae</taxon>
        <taxon>Cronobacter</taxon>
    </lineage>
</organism>
<name>YQGF_CROS8</name>
<evidence type="ECO:0000255" key="1">
    <source>
        <dbReference type="HAMAP-Rule" id="MF_00651"/>
    </source>
</evidence>
<dbReference type="EC" id="3.1.-.-" evidence="1"/>
<dbReference type="EMBL" id="CP000783">
    <property type="protein sequence ID" value="ABU75691.1"/>
    <property type="molecule type" value="Genomic_DNA"/>
</dbReference>
<dbReference type="SMR" id="A7MJR8"/>
<dbReference type="KEGG" id="esa:ESA_00393"/>
<dbReference type="HOGENOM" id="CLU_098240_3_0_6"/>
<dbReference type="Proteomes" id="UP000000260">
    <property type="component" value="Chromosome"/>
</dbReference>
<dbReference type="GO" id="GO:0005829">
    <property type="term" value="C:cytosol"/>
    <property type="evidence" value="ECO:0007669"/>
    <property type="project" value="TreeGrafter"/>
</dbReference>
<dbReference type="GO" id="GO:0004518">
    <property type="term" value="F:nuclease activity"/>
    <property type="evidence" value="ECO:0007669"/>
    <property type="project" value="UniProtKB-KW"/>
</dbReference>
<dbReference type="GO" id="GO:0000967">
    <property type="term" value="P:rRNA 5'-end processing"/>
    <property type="evidence" value="ECO:0007669"/>
    <property type="project" value="UniProtKB-UniRule"/>
</dbReference>
<dbReference type="CDD" id="cd16964">
    <property type="entry name" value="YqgF"/>
    <property type="match status" value="1"/>
</dbReference>
<dbReference type="FunFam" id="3.30.420.140:FF:000002">
    <property type="entry name" value="Putative pre-16S rRNA nuclease"/>
    <property type="match status" value="1"/>
</dbReference>
<dbReference type="Gene3D" id="3.30.420.140">
    <property type="entry name" value="YqgF/RNase H-like domain"/>
    <property type="match status" value="1"/>
</dbReference>
<dbReference type="HAMAP" id="MF_00651">
    <property type="entry name" value="Nuclease_YqgF"/>
    <property type="match status" value="1"/>
</dbReference>
<dbReference type="InterPro" id="IPR012337">
    <property type="entry name" value="RNaseH-like_sf"/>
</dbReference>
<dbReference type="InterPro" id="IPR005227">
    <property type="entry name" value="YqgF"/>
</dbReference>
<dbReference type="InterPro" id="IPR006641">
    <property type="entry name" value="YqgF/RNaseH-like_dom"/>
</dbReference>
<dbReference type="InterPro" id="IPR037027">
    <property type="entry name" value="YqgF/RNaseH-like_dom_sf"/>
</dbReference>
<dbReference type="NCBIfam" id="TIGR00250">
    <property type="entry name" value="RNAse_H_YqgF"/>
    <property type="match status" value="1"/>
</dbReference>
<dbReference type="PANTHER" id="PTHR33317">
    <property type="entry name" value="POLYNUCLEOTIDYL TRANSFERASE, RIBONUCLEASE H-LIKE SUPERFAMILY PROTEIN"/>
    <property type="match status" value="1"/>
</dbReference>
<dbReference type="PANTHER" id="PTHR33317:SF4">
    <property type="entry name" value="POLYNUCLEOTIDYL TRANSFERASE, RIBONUCLEASE H-LIKE SUPERFAMILY PROTEIN"/>
    <property type="match status" value="1"/>
</dbReference>
<dbReference type="Pfam" id="PF03652">
    <property type="entry name" value="RuvX"/>
    <property type="match status" value="1"/>
</dbReference>
<dbReference type="SMART" id="SM00732">
    <property type="entry name" value="YqgFc"/>
    <property type="match status" value="1"/>
</dbReference>
<dbReference type="SUPFAM" id="SSF53098">
    <property type="entry name" value="Ribonuclease H-like"/>
    <property type="match status" value="1"/>
</dbReference>
<keyword id="KW-0963">Cytoplasm</keyword>
<keyword id="KW-0378">Hydrolase</keyword>
<keyword id="KW-0540">Nuclease</keyword>
<keyword id="KW-1185">Reference proteome</keyword>
<keyword id="KW-0690">Ribosome biogenesis</keyword>
<sequence length="138" mass="15021">MSGTLLAFDFGTKSIGVAIGQRVTATARPLTAIKAQNGNPDWTLIEKLLKEWQPDDVIVGLPLNMDGTEQPLTARARTFANRLHGRFGIKVTLHDERLSTVEARAGLFERGGFRALNKGSVDSASAVVILESYFEQHG</sequence>
<comment type="function">
    <text evidence="1">Could be a nuclease involved in processing of the 5'-end of pre-16S rRNA.</text>
</comment>
<comment type="subcellular location">
    <subcellularLocation>
        <location evidence="1">Cytoplasm</location>
    </subcellularLocation>
</comment>
<comment type="similarity">
    <text evidence="1">Belongs to the YqgF nuclease family.</text>
</comment>
<gene>
    <name evidence="1" type="primary">yqgF</name>
    <name type="ordered locus">ESA_00393</name>
</gene>